<organism>
    <name type="scientific">Lacticaseibacillus paracasei (strain ATCC 334 / BCRC 17002 / CCUG 31169 / CIP 107868 / KCTC 3260 / NRRL B-441)</name>
    <name type="common">Lactobacillus paracasei</name>
    <dbReference type="NCBI Taxonomy" id="321967"/>
    <lineage>
        <taxon>Bacteria</taxon>
        <taxon>Bacillati</taxon>
        <taxon>Bacillota</taxon>
        <taxon>Bacilli</taxon>
        <taxon>Lactobacillales</taxon>
        <taxon>Lactobacillaceae</taxon>
        <taxon>Lacticaseibacillus</taxon>
    </lineage>
</organism>
<feature type="chain" id="PRO_0000286228" description="Spermidine/putrescine import ATP-binding protein PotA">
    <location>
        <begin position="1"/>
        <end position="362"/>
    </location>
</feature>
<feature type="domain" description="ABC transporter" evidence="1">
    <location>
        <begin position="6"/>
        <end position="236"/>
    </location>
</feature>
<feature type="binding site" evidence="1">
    <location>
        <begin position="38"/>
        <end position="45"/>
    </location>
    <ligand>
        <name>ATP</name>
        <dbReference type="ChEBI" id="CHEBI:30616"/>
    </ligand>
</feature>
<comment type="function">
    <text evidence="1">Part of the ABC transporter complex PotABCD involved in spermidine/putrescine import. Responsible for energy coupling to the transport system.</text>
</comment>
<comment type="catalytic activity">
    <reaction evidence="1">
        <text>ATP + H2O + polyamine-[polyamine-binding protein]Side 1 = ADP + phosphate + polyamineSide 2 + [polyamine-binding protein]Side 1.</text>
        <dbReference type="EC" id="7.6.2.11"/>
    </reaction>
</comment>
<comment type="subunit">
    <text evidence="1">The complex is composed of two ATP-binding proteins (PotA), two transmembrane proteins (PotB and PotC) and a solute-binding protein (PotD).</text>
</comment>
<comment type="subcellular location">
    <subcellularLocation>
        <location evidence="1">Cell membrane</location>
        <topology evidence="1">Peripheral membrane protein</topology>
    </subcellularLocation>
</comment>
<comment type="similarity">
    <text evidence="1">Belongs to the ABC transporter superfamily. Spermidine/putrescine importer (TC 3.A.1.11.1) family.</text>
</comment>
<evidence type="ECO:0000255" key="1">
    <source>
        <dbReference type="HAMAP-Rule" id="MF_01726"/>
    </source>
</evidence>
<proteinExistence type="inferred from homology"/>
<protein>
    <recommendedName>
        <fullName evidence="1">Spermidine/putrescine import ATP-binding protein PotA</fullName>
        <ecNumber evidence="1">7.6.2.11</ecNumber>
    </recommendedName>
</protein>
<sequence length="362" mass="40982">MSNIIVELKHVGKRYGDTQVLKDINIEIEQGKFYTLLGPSGSGKTTILRAIAGFLDVSEGEVLFDGKRINDVPANQRKVNTVFQDYALFPHLNVFDNVAFGLRLHRMSKQDIQTKVEDALKMVRLQGYADREISELSGGQQQRVAIARAIVLEPQVLLLDEPLSALDAKLRKDMQYELRELQERLGITFLFVTHDQEEALALSDEIFVMNDGEVQQSGTPVDIYDEPVNHFVADFIGESNIIQGHMIKDFLVEFNGKRFECADAGMRPNEPVEVVLRPEDLDITPANSGKVNVEVDTQLFRGDYYEIVGYDDLKNEWLIHSTNPAKDGETVGLTFDPEDIHVMRLNESEEDFDARLETYEGE</sequence>
<reference key="1">
    <citation type="journal article" date="2006" name="Proc. Natl. Acad. Sci. U.S.A.">
        <title>Comparative genomics of the lactic acid bacteria.</title>
        <authorList>
            <person name="Makarova K.S."/>
            <person name="Slesarev A."/>
            <person name="Wolf Y.I."/>
            <person name="Sorokin A."/>
            <person name="Mirkin B."/>
            <person name="Koonin E.V."/>
            <person name="Pavlov A."/>
            <person name="Pavlova N."/>
            <person name="Karamychev V."/>
            <person name="Polouchine N."/>
            <person name="Shakhova V."/>
            <person name="Grigoriev I."/>
            <person name="Lou Y."/>
            <person name="Rohksar D."/>
            <person name="Lucas S."/>
            <person name="Huang K."/>
            <person name="Goodstein D.M."/>
            <person name="Hawkins T."/>
            <person name="Plengvidhya V."/>
            <person name="Welker D."/>
            <person name="Hughes J."/>
            <person name="Goh Y."/>
            <person name="Benson A."/>
            <person name="Baldwin K."/>
            <person name="Lee J.-H."/>
            <person name="Diaz-Muniz I."/>
            <person name="Dosti B."/>
            <person name="Smeianov V."/>
            <person name="Wechter W."/>
            <person name="Barabote R."/>
            <person name="Lorca G."/>
            <person name="Altermann E."/>
            <person name="Barrangou R."/>
            <person name="Ganesan B."/>
            <person name="Xie Y."/>
            <person name="Rawsthorne H."/>
            <person name="Tamir D."/>
            <person name="Parker C."/>
            <person name="Breidt F."/>
            <person name="Broadbent J.R."/>
            <person name="Hutkins R."/>
            <person name="O'Sullivan D."/>
            <person name="Steele J."/>
            <person name="Unlu G."/>
            <person name="Saier M.H. Jr."/>
            <person name="Klaenhammer T."/>
            <person name="Richardson P."/>
            <person name="Kozyavkin S."/>
            <person name="Weimer B.C."/>
            <person name="Mills D.A."/>
        </authorList>
    </citation>
    <scope>NUCLEOTIDE SEQUENCE [LARGE SCALE GENOMIC DNA]</scope>
    <source>
        <strain>ATCC 334 / BCRC 17002 / CCUG 31169 / CIP 107868 / KCTC 3260 / NRRL B-441</strain>
    </source>
</reference>
<accession>Q03AH0</accession>
<keyword id="KW-0067">ATP-binding</keyword>
<keyword id="KW-1003">Cell membrane</keyword>
<keyword id="KW-0472">Membrane</keyword>
<keyword id="KW-0547">Nucleotide-binding</keyword>
<keyword id="KW-1185">Reference proteome</keyword>
<keyword id="KW-1278">Translocase</keyword>
<keyword id="KW-0813">Transport</keyword>
<gene>
    <name evidence="1" type="primary">potA</name>
    <name type="ordered locus">LSEI_1006</name>
</gene>
<name>POTA_LACP3</name>
<dbReference type="EC" id="7.6.2.11" evidence="1"/>
<dbReference type="EMBL" id="CP000423">
    <property type="protein sequence ID" value="ABJ69802.1"/>
    <property type="molecule type" value="Genomic_DNA"/>
</dbReference>
<dbReference type="RefSeq" id="WP_003564358.1">
    <property type="nucleotide sequence ID" value="NC_008526.1"/>
</dbReference>
<dbReference type="RefSeq" id="YP_806244.1">
    <property type="nucleotide sequence ID" value="NC_008526.1"/>
</dbReference>
<dbReference type="SMR" id="Q03AH0"/>
<dbReference type="STRING" id="321967.LSEI_1006"/>
<dbReference type="PaxDb" id="321967-LSEI_1006"/>
<dbReference type="KEGG" id="lca:LSEI_1006"/>
<dbReference type="PATRIC" id="fig|321967.11.peg.978"/>
<dbReference type="HOGENOM" id="CLU_000604_1_1_9"/>
<dbReference type="Proteomes" id="UP000001651">
    <property type="component" value="Chromosome"/>
</dbReference>
<dbReference type="GO" id="GO:0043190">
    <property type="term" value="C:ATP-binding cassette (ABC) transporter complex"/>
    <property type="evidence" value="ECO:0007669"/>
    <property type="project" value="InterPro"/>
</dbReference>
<dbReference type="GO" id="GO:0015594">
    <property type="term" value="F:ABC-type putrescine transporter activity"/>
    <property type="evidence" value="ECO:0007669"/>
    <property type="project" value="InterPro"/>
</dbReference>
<dbReference type="GO" id="GO:0005524">
    <property type="term" value="F:ATP binding"/>
    <property type="evidence" value="ECO:0007669"/>
    <property type="project" value="UniProtKB-KW"/>
</dbReference>
<dbReference type="GO" id="GO:0016887">
    <property type="term" value="F:ATP hydrolysis activity"/>
    <property type="evidence" value="ECO:0007669"/>
    <property type="project" value="InterPro"/>
</dbReference>
<dbReference type="CDD" id="cd03300">
    <property type="entry name" value="ABC_PotA_N"/>
    <property type="match status" value="1"/>
</dbReference>
<dbReference type="FunFam" id="3.40.50.300:FF:000425">
    <property type="entry name" value="Probable ABC transporter, ATP-binding subunit"/>
    <property type="match status" value="1"/>
</dbReference>
<dbReference type="Gene3D" id="2.40.50.100">
    <property type="match status" value="1"/>
</dbReference>
<dbReference type="Gene3D" id="3.40.50.300">
    <property type="entry name" value="P-loop containing nucleotide triphosphate hydrolases"/>
    <property type="match status" value="1"/>
</dbReference>
<dbReference type="InterPro" id="IPR003593">
    <property type="entry name" value="AAA+_ATPase"/>
</dbReference>
<dbReference type="InterPro" id="IPR050093">
    <property type="entry name" value="ABC_SmlMolc_Importer"/>
</dbReference>
<dbReference type="InterPro" id="IPR003439">
    <property type="entry name" value="ABC_transporter-like_ATP-bd"/>
</dbReference>
<dbReference type="InterPro" id="IPR017871">
    <property type="entry name" value="ABC_transporter-like_CS"/>
</dbReference>
<dbReference type="InterPro" id="IPR008995">
    <property type="entry name" value="Mo/tungstate-bd_C_term_dom"/>
</dbReference>
<dbReference type="InterPro" id="IPR027417">
    <property type="entry name" value="P-loop_NTPase"/>
</dbReference>
<dbReference type="InterPro" id="IPR017879">
    <property type="entry name" value="PotA_ATP-bd"/>
</dbReference>
<dbReference type="InterPro" id="IPR013611">
    <property type="entry name" value="Transp-assoc_OB_typ2"/>
</dbReference>
<dbReference type="PANTHER" id="PTHR42781">
    <property type="entry name" value="SPERMIDINE/PUTRESCINE IMPORT ATP-BINDING PROTEIN POTA"/>
    <property type="match status" value="1"/>
</dbReference>
<dbReference type="PANTHER" id="PTHR42781:SF4">
    <property type="entry name" value="SPERMIDINE_PUTRESCINE IMPORT ATP-BINDING PROTEIN POTA"/>
    <property type="match status" value="1"/>
</dbReference>
<dbReference type="Pfam" id="PF00005">
    <property type="entry name" value="ABC_tran"/>
    <property type="match status" value="1"/>
</dbReference>
<dbReference type="Pfam" id="PF08402">
    <property type="entry name" value="TOBE_2"/>
    <property type="match status" value="1"/>
</dbReference>
<dbReference type="SMART" id="SM00382">
    <property type="entry name" value="AAA"/>
    <property type="match status" value="1"/>
</dbReference>
<dbReference type="SUPFAM" id="SSF50331">
    <property type="entry name" value="MOP-like"/>
    <property type="match status" value="1"/>
</dbReference>
<dbReference type="SUPFAM" id="SSF52540">
    <property type="entry name" value="P-loop containing nucleoside triphosphate hydrolases"/>
    <property type="match status" value="1"/>
</dbReference>
<dbReference type="PROSITE" id="PS00211">
    <property type="entry name" value="ABC_TRANSPORTER_1"/>
    <property type="match status" value="1"/>
</dbReference>
<dbReference type="PROSITE" id="PS50893">
    <property type="entry name" value="ABC_TRANSPORTER_2"/>
    <property type="match status" value="1"/>
</dbReference>
<dbReference type="PROSITE" id="PS51305">
    <property type="entry name" value="POTA"/>
    <property type="match status" value="1"/>
</dbReference>